<reference key="1">
    <citation type="journal article" date="2003" name="Proc. Natl. Acad. Sci. U.S.A.">
        <title>The complete genome sequence of the Arabidopsis and tomato pathogen Pseudomonas syringae pv. tomato DC3000.</title>
        <authorList>
            <person name="Buell C.R."/>
            <person name="Joardar V."/>
            <person name="Lindeberg M."/>
            <person name="Selengut J."/>
            <person name="Paulsen I.T."/>
            <person name="Gwinn M.L."/>
            <person name="Dodson R.J."/>
            <person name="DeBoy R.T."/>
            <person name="Durkin A.S."/>
            <person name="Kolonay J.F."/>
            <person name="Madupu R."/>
            <person name="Daugherty S.C."/>
            <person name="Brinkac L.M."/>
            <person name="Beanan M.J."/>
            <person name="Haft D.H."/>
            <person name="Nelson W.C."/>
            <person name="Davidsen T.M."/>
            <person name="Zafar N."/>
            <person name="Zhou L."/>
            <person name="Liu J."/>
            <person name="Yuan Q."/>
            <person name="Khouri H.M."/>
            <person name="Fedorova N.B."/>
            <person name="Tran B."/>
            <person name="Russell D."/>
            <person name="Berry K.J."/>
            <person name="Utterback T.R."/>
            <person name="Van Aken S.E."/>
            <person name="Feldblyum T.V."/>
            <person name="D'Ascenzo M."/>
            <person name="Deng W.-L."/>
            <person name="Ramos A.R."/>
            <person name="Alfano J.R."/>
            <person name="Cartinhour S."/>
            <person name="Chatterjee A.K."/>
            <person name="Delaney T.P."/>
            <person name="Lazarowitz S.G."/>
            <person name="Martin G.B."/>
            <person name="Schneider D.J."/>
            <person name="Tang X."/>
            <person name="Bender C.L."/>
            <person name="White O."/>
            <person name="Fraser C.M."/>
            <person name="Collmer A."/>
        </authorList>
    </citation>
    <scope>NUCLEOTIDE SEQUENCE [LARGE SCALE GENOMIC DNA]</scope>
    <source>
        <strain>ATCC BAA-871 / DC3000</strain>
    </source>
</reference>
<proteinExistence type="inferred from homology"/>
<gene>
    <name evidence="1" type="primary">rplF</name>
    <name type="ordered locus">PSPTO_0641</name>
</gene>
<sequence>MSRVAKNPVKLPSGVEVKLVGQQLSVKGAKGTLELIIHSSVEIVEEAGELRFAARNGDQQTRAMAGTTRALVNNMVQGVSQGFERKLQLVGVGYKAQAKGTVLNLALGFSHPVDYELPNGITAETPSQTDILIRGIDKQLVGQVAAEIRDFRRPEPYKGKGVRYADEVVRRKEAKKK</sequence>
<feature type="chain" id="PRO_0000265279" description="Large ribosomal subunit protein uL6">
    <location>
        <begin position="1"/>
        <end position="177"/>
    </location>
</feature>
<evidence type="ECO:0000255" key="1">
    <source>
        <dbReference type="HAMAP-Rule" id="MF_01365"/>
    </source>
</evidence>
<evidence type="ECO:0000305" key="2"/>
<dbReference type="EMBL" id="AE016853">
    <property type="protein sequence ID" value="AAO54183.1"/>
    <property type="molecule type" value="Genomic_DNA"/>
</dbReference>
<dbReference type="RefSeq" id="NP_790488.1">
    <property type="nucleotide sequence ID" value="NC_004578.1"/>
</dbReference>
<dbReference type="RefSeq" id="WP_005768939.1">
    <property type="nucleotide sequence ID" value="NC_004578.1"/>
</dbReference>
<dbReference type="SMR" id="Q889V6"/>
<dbReference type="STRING" id="223283.PSPTO_0641"/>
<dbReference type="GeneID" id="1182261"/>
<dbReference type="KEGG" id="pst:PSPTO_0641"/>
<dbReference type="PATRIC" id="fig|223283.9.peg.647"/>
<dbReference type="eggNOG" id="COG0097">
    <property type="taxonomic scope" value="Bacteria"/>
</dbReference>
<dbReference type="HOGENOM" id="CLU_065464_1_2_6"/>
<dbReference type="OrthoDB" id="9805007at2"/>
<dbReference type="PhylomeDB" id="Q889V6"/>
<dbReference type="Proteomes" id="UP000002515">
    <property type="component" value="Chromosome"/>
</dbReference>
<dbReference type="GO" id="GO:0022625">
    <property type="term" value="C:cytosolic large ribosomal subunit"/>
    <property type="evidence" value="ECO:0007669"/>
    <property type="project" value="TreeGrafter"/>
</dbReference>
<dbReference type="GO" id="GO:0019843">
    <property type="term" value="F:rRNA binding"/>
    <property type="evidence" value="ECO:0007669"/>
    <property type="project" value="UniProtKB-UniRule"/>
</dbReference>
<dbReference type="GO" id="GO:0003735">
    <property type="term" value="F:structural constituent of ribosome"/>
    <property type="evidence" value="ECO:0007669"/>
    <property type="project" value="InterPro"/>
</dbReference>
<dbReference type="GO" id="GO:0002181">
    <property type="term" value="P:cytoplasmic translation"/>
    <property type="evidence" value="ECO:0007669"/>
    <property type="project" value="TreeGrafter"/>
</dbReference>
<dbReference type="FunFam" id="3.90.930.12:FF:000001">
    <property type="entry name" value="50S ribosomal protein L6"/>
    <property type="match status" value="1"/>
</dbReference>
<dbReference type="FunFam" id="3.90.930.12:FF:000002">
    <property type="entry name" value="50S ribosomal protein L6"/>
    <property type="match status" value="1"/>
</dbReference>
<dbReference type="Gene3D" id="3.90.930.12">
    <property type="entry name" value="Ribosomal protein L6, alpha-beta domain"/>
    <property type="match status" value="2"/>
</dbReference>
<dbReference type="HAMAP" id="MF_01365_B">
    <property type="entry name" value="Ribosomal_uL6_B"/>
    <property type="match status" value="1"/>
</dbReference>
<dbReference type="InterPro" id="IPR000702">
    <property type="entry name" value="Ribosomal_uL6-like"/>
</dbReference>
<dbReference type="InterPro" id="IPR036789">
    <property type="entry name" value="Ribosomal_uL6-like_a/b-dom_sf"/>
</dbReference>
<dbReference type="InterPro" id="IPR020040">
    <property type="entry name" value="Ribosomal_uL6_a/b-dom"/>
</dbReference>
<dbReference type="InterPro" id="IPR019906">
    <property type="entry name" value="Ribosomal_uL6_bac-type"/>
</dbReference>
<dbReference type="InterPro" id="IPR002358">
    <property type="entry name" value="Ribosomal_uL6_CS"/>
</dbReference>
<dbReference type="NCBIfam" id="TIGR03654">
    <property type="entry name" value="L6_bact"/>
    <property type="match status" value="1"/>
</dbReference>
<dbReference type="PANTHER" id="PTHR11655">
    <property type="entry name" value="60S/50S RIBOSOMAL PROTEIN L6/L9"/>
    <property type="match status" value="1"/>
</dbReference>
<dbReference type="PANTHER" id="PTHR11655:SF14">
    <property type="entry name" value="LARGE RIBOSOMAL SUBUNIT PROTEIN UL6M"/>
    <property type="match status" value="1"/>
</dbReference>
<dbReference type="Pfam" id="PF00347">
    <property type="entry name" value="Ribosomal_L6"/>
    <property type="match status" value="2"/>
</dbReference>
<dbReference type="PIRSF" id="PIRSF002162">
    <property type="entry name" value="Ribosomal_L6"/>
    <property type="match status" value="1"/>
</dbReference>
<dbReference type="PRINTS" id="PR00059">
    <property type="entry name" value="RIBOSOMALL6"/>
</dbReference>
<dbReference type="SUPFAM" id="SSF56053">
    <property type="entry name" value="Ribosomal protein L6"/>
    <property type="match status" value="2"/>
</dbReference>
<dbReference type="PROSITE" id="PS00525">
    <property type="entry name" value="RIBOSOMAL_L6_1"/>
    <property type="match status" value="1"/>
</dbReference>
<comment type="function">
    <text evidence="1">This protein binds to the 23S rRNA, and is important in its secondary structure. It is located near the subunit interface in the base of the L7/L12 stalk, and near the tRNA binding site of the peptidyltransferase center.</text>
</comment>
<comment type="subunit">
    <text evidence="1">Part of the 50S ribosomal subunit.</text>
</comment>
<comment type="similarity">
    <text evidence="1">Belongs to the universal ribosomal protein uL6 family.</text>
</comment>
<keyword id="KW-1185">Reference proteome</keyword>
<keyword id="KW-0687">Ribonucleoprotein</keyword>
<keyword id="KW-0689">Ribosomal protein</keyword>
<keyword id="KW-0694">RNA-binding</keyword>
<keyword id="KW-0699">rRNA-binding</keyword>
<name>RL6_PSESM</name>
<protein>
    <recommendedName>
        <fullName evidence="1">Large ribosomal subunit protein uL6</fullName>
    </recommendedName>
    <alternativeName>
        <fullName evidence="2">50S ribosomal protein L6</fullName>
    </alternativeName>
</protein>
<organism>
    <name type="scientific">Pseudomonas syringae pv. tomato (strain ATCC BAA-871 / DC3000)</name>
    <dbReference type="NCBI Taxonomy" id="223283"/>
    <lineage>
        <taxon>Bacteria</taxon>
        <taxon>Pseudomonadati</taxon>
        <taxon>Pseudomonadota</taxon>
        <taxon>Gammaproteobacteria</taxon>
        <taxon>Pseudomonadales</taxon>
        <taxon>Pseudomonadaceae</taxon>
        <taxon>Pseudomonas</taxon>
    </lineage>
</organism>
<accession>Q889V6</accession>